<feature type="chain" id="PRO_0000098299" description="DNA translocase FtsK">
    <location>
        <begin position="1"/>
        <end position="797"/>
    </location>
</feature>
<feature type="transmembrane region" description="Helical" evidence="2">
    <location>
        <begin position="31"/>
        <end position="51"/>
    </location>
</feature>
<feature type="transmembrane region" description="Helical" evidence="2">
    <location>
        <begin position="60"/>
        <end position="80"/>
    </location>
</feature>
<feature type="transmembrane region" description="Helical" evidence="2">
    <location>
        <begin position="92"/>
        <end position="112"/>
    </location>
</feature>
<feature type="transmembrane region" description="Helical" evidence="2">
    <location>
        <begin position="151"/>
        <end position="171"/>
    </location>
</feature>
<feature type="topological domain" description="Cytoplasmic" evidence="2">
    <location>
        <begin position="172"/>
        <end position="797"/>
    </location>
</feature>
<feature type="domain" description="FtsK" evidence="3">
    <location>
        <begin position="462"/>
        <end position="658"/>
    </location>
</feature>
<feature type="region of interest" description="Disordered" evidence="4">
    <location>
        <begin position="1"/>
        <end position="22"/>
    </location>
</feature>
<feature type="region of interest" description="Disordered" evidence="4">
    <location>
        <begin position="199"/>
        <end position="320"/>
    </location>
</feature>
<feature type="region of interest" description="Disordered" evidence="4">
    <location>
        <begin position="331"/>
        <end position="350"/>
    </location>
</feature>
<feature type="compositionally biased region" description="Basic residues" evidence="4">
    <location>
        <begin position="1"/>
        <end position="21"/>
    </location>
</feature>
<feature type="compositionally biased region" description="Basic and acidic residues" evidence="4">
    <location>
        <begin position="201"/>
        <end position="225"/>
    </location>
</feature>
<feature type="compositionally biased region" description="Polar residues" evidence="4">
    <location>
        <begin position="282"/>
        <end position="313"/>
    </location>
</feature>
<feature type="compositionally biased region" description="Polar residues" evidence="4">
    <location>
        <begin position="338"/>
        <end position="349"/>
    </location>
</feature>
<feature type="binding site" evidence="3">
    <location>
        <begin position="482"/>
        <end position="487"/>
    </location>
    <ligand>
        <name>ATP</name>
        <dbReference type="ChEBI" id="CHEBI:30616"/>
    </ligand>
</feature>
<dbReference type="EMBL" id="AE015929">
    <property type="protein sequence ID" value="AAO04550.1"/>
    <property type="molecule type" value="Genomic_DNA"/>
</dbReference>
<dbReference type="RefSeq" id="NP_764508.1">
    <property type="nucleotide sequence ID" value="NC_004461.1"/>
</dbReference>
<dbReference type="RefSeq" id="WP_002439534.1">
    <property type="nucleotide sequence ID" value="NZ_WBME01000001.1"/>
</dbReference>
<dbReference type="SMR" id="Q8CMM5"/>
<dbReference type="KEGG" id="sep:SE_0953"/>
<dbReference type="PATRIC" id="fig|176280.10.peg.927"/>
<dbReference type="eggNOG" id="COG1674">
    <property type="taxonomic scope" value="Bacteria"/>
</dbReference>
<dbReference type="HOGENOM" id="CLU_001981_9_2_9"/>
<dbReference type="OrthoDB" id="9807790at2"/>
<dbReference type="Proteomes" id="UP000001411">
    <property type="component" value="Chromosome"/>
</dbReference>
<dbReference type="GO" id="GO:0005886">
    <property type="term" value="C:plasma membrane"/>
    <property type="evidence" value="ECO:0007669"/>
    <property type="project" value="UniProtKB-SubCell"/>
</dbReference>
<dbReference type="GO" id="GO:0005524">
    <property type="term" value="F:ATP binding"/>
    <property type="evidence" value="ECO:0007669"/>
    <property type="project" value="UniProtKB-KW"/>
</dbReference>
<dbReference type="GO" id="GO:0016887">
    <property type="term" value="F:ATP hydrolysis activity"/>
    <property type="evidence" value="ECO:0007669"/>
    <property type="project" value="InterPro"/>
</dbReference>
<dbReference type="GO" id="GO:0003677">
    <property type="term" value="F:DNA binding"/>
    <property type="evidence" value="ECO:0007669"/>
    <property type="project" value="UniProtKB-KW"/>
</dbReference>
<dbReference type="GO" id="GO:0051301">
    <property type="term" value="P:cell division"/>
    <property type="evidence" value="ECO:0007669"/>
    <property type="project" value="UniProtKB-KW"/>
</dbReference>
<dbReference type="GO" id="GO:0007059">
    <property type="term" value="P:chromosome segregation"/>
    <property type="evidence" value="ECO:0007669"/>
    <property type="project" value="UniProtKB-KW"/>
</dbReference>
<dbReference type="Gene3D" id="3.30.980.40">
    <property type="match status" value="1"/>
</dbReference>
<dbReference type="Gene3D" id="3.40.50.300">
    <property type="entry name" value="P-loop containing nucleotide triphosphate hydrolases"/>
    <property type="match status" value="1"/>
</dbReference>
<dbReference type="Gene3D" id="1.10.10.10">
    <property type="entry name" value="Winged helix-like DNA-binding domain superfamily/Winged helix DNA-binding domain"/>
    <property type="match status" value="1"/>
</dbReference>
<dbReference type="InterPro" id="IPR003593">
    <property type="entry name" value="AAA+_ATPase"/>
</dbReference>
<dbReference type="InterPro" id="IPR050206">
    <property type="entry name" value="FtsK/SpoIIIE/SftA"/>
</dbReference>
<dbReference type="InterPro" id="IPR041027">
    <property type="entry name" value="FtsK_alpha"/>
</dbReference>
<dbReference type="InterPro" id="IPR002543">
    <property type="entry name" value="FtsK_dom"/>
</dbReference>
<dbReference type="InterPro" id="IPR018541">
    <property type="entry name" value="Ftsk_gamma"/>
</dbReference>
<dbReference type="InterPro" id="IPR036259">
    <property type="entry name" value="MFS_trans_sf"/>
</dbReference>
<dbReference type="InterPro" id="IPR027417">
    <property type="entry name" value="P-loop_NTPase"/>
</dbReference>
<dbReference type="InterPro" id="IPR036388">
    <property type="entry name" value="WH-like_DNA-bd_sf"/>
</dbReference>
<dbReference type="InterPro" id="IPR036390">
    <property type="entry name" value="WH_DNA-bd_sf"/>
</dbReference>
<dbReference type="PANTHER" id="PTHR22683:SF41">
    <property type="entry name" value="DNA TRANSLOCASE FTSK"/>
    <property type="match status" value="1"/>
</dbReference>
<dbReference type="PANTHER" id="PTHR22683">
    <property type="entry name" value="SPORULATION PROTEIN RELATED"/>
    <property type="match status" value="1"/>
</dbReference>
<dbReference type="Pfam" id="PF17854">
    <property type="entry name" value="FtsK_alpha"/>
    <property type="match status" value="1"/>
</dbReference>
<dbReference type="Pfam" id="PF09397">
    <property type="entry name" value="FtsK_gamma"/>
    <property type="match status" value="1"/>
</dbReference>
<dbReference type="Pfam" id="PF01580">
    <property type="entry name" value="FtsK_SpoIIIE"/>
    <property type="match status" value="1"/>
</dbReference>
<dbReference type="SMART" id="SM00382">
    <property type="entry name" value="AAA"/>
    <property type="match status" value="1"/>
</dbReference>
<dbReference type="SMART" id="SM00843">
    <property type="entry name" value="Ftsk_gamma"/>
    <property type="match status" value="1"/>
</dbReference>
<dbReference type="SUPFAM" id="SSF103473">
    <property type="entry name" value="MFS general substrate transporter"/>
    <property type="match status" value="1"/>
</dbReference>
<dbReference type="SUPFAM" id="SSF52540">
    <property type="entry name" value="P-loop containing nucleoside triphosphate hydrolases"/>
    <property type="match status" value="1"/>
</dbReference>
<dbReference type="SUPFAM" id="SSF46785">
    <property type="entry name" value="Winged helix' DNA-binding domain"/>
    <property type="match status" value="1"/>
</dbReference>
<dbReference type="PROSITE" id="PS50901">
    <property type="entry name" value="FTSK"/>
    <property type="match status" value="1"/>
</dbReference>
<comment type="function">
    <text evidence="1">Essential cell division protein that coordinates cell division and chromosome segregation. The N-terminus is involved in assembly of the cell-division machinery. The C-terminus functions as a DNA motor that moves dsDNA in an ATP-dependent manner towards the dif recombination site, which is located within the replication terminus region. Required for activation of the Xer recombinase, allowing activation of chromosome unlinking by recombination (By similarity).</text>
</comment>
<comment type="subunit">
    <text evidence="1">Homohexamer. Forms a ring that surrounds DNA (By similarity).</text>
</comment>
<comment type="subcellular location">
    <subcellularLocation>
        <location evidence="1">Cell membrane</location>
        <topology evidence="1">Multi-pass membrane protein</topology>
    </subcellularLocation>
    <text evidence="1">Located at the septum.</text>
</comment>
<comment type="domain">
    <text evidence="1">Consists of an N-terminal domain, which is sufficient for the localization to the septal ring and is required for cell division, followed by a linker domain, and a C-terminal domain, which forms the translocation motor involved in chromosome segregation. The C-terminal domain can be further subdivided into alpha, beta and gamma subdomains. The alpha and beta subdomains form the DNA pump, and the gamma subdomain is a regulatory subdomain (By similarity).</text>
</comment>
<comment type="similarity">
    <text evidence="5">Belongs to the FtsK/SpoIIIE/SftA family.</text>
</comment>
<accession>Q8CMM5</accession>
<reference key="1">
    <citation type="journal article" date="2003" name="Mol. Microbiol.">
        <title>Genome-based analysis of virulence genes in a non-biofilm-forming Staphylococcus epidermidis strain (ATCC 12228).</title>
        <authorList>
            <person name="Zhang Y.-Q."/>
            <person name="Ren S.-X."/>
            <person name="Li H.-L."/>
            <person name="Wang Y.-X."/>
            <person name="Fu G."/>
            <person name="Yang J."/>
            <person name="Qin Z.-Q."/>
            <person name="Miao Y.-G."/>
            <person name="Wang W.-Y."/>
            <person name="Chen R.-S."/>
            <person name="Shen Y."/>
            <person name="Chen Z."/>
            <person name="Yuan Z.-H."/>
            <person name="Zhao G.-P."/>
            <person name="Qu D."/>
            <person name="Danchin A."/>
            <person name="Wen Y.-M."/>
        </authorList>
    </citation>
    <scope>NUCLEOTIDE SEQUENCE [LARGE SCALE GENOMIC DNA]</scope>
    <source>
        <strain>ATCC 12228 / FDA PCI 1200</strain>
    </source>
</reference>
<evidence type="ECO:0000250" key="1"/>
<evidence type="ECO:0000255" key="2"/>
<evidence type="ECO:0000255" key="3">
    <source>
        <dbReference type="PROSITE-ProRule" id="PRU00289"/>
    </source>
</evidence>
<evidence type="ECO:0000256" key="4">
    <source>
        <dbReference type="SAM" id="MobiDB-lite"/>
    </source>
</evidence>
<evidence type="ECO:0000305" key="5"/>
<protein>
    <recommendedName>
        <fullName>DNA translocase FtsK</fullName>
    </recommendedName>
</protein>
<gene>
    <name type="primary">ftsK</name>
    <name type="ordered locus">SE_0953</name>
</gene>
<proteinExistence type="inferred from homology"/>
<name>FTSK_STAES</name>
<sequence length="797" mass="89453">MPQAKKRTSTKRKGNKKTNKKKQNETPLRYIFSIIVVILIILGAFQLGIIGRMIDSFFNYLFGMSRYLTYILVLIATIFITYSKQIPRTRRSIGAIVLQLALLFIAQLYFHFSHNITSQREPVLSFVYKAYEQTHFPNFGGGLIGFYLLKLFIPLISIVGVIIITILLLASSFILLLNLRHRDVTKSLFDNLKSSSNHASESIKQKREQNKIKKEEKAQLKEAKIERKKQKKSRQNNNVIKDVSDFPEISQSDDIPIYGHNEQEDKRPNTANQRQKRVLDNEQFQQSLPSTKNQSINNNQPSTTAENNQQQSQAEGSISEAGEEANIEYTVPPLSLLKQPTKQKTTSKAEVQRKGQVLESTLKNFGVNAKVTQIKIGPAVTQYEIQPAQGVKVSKIVNLHNDIALALAAKDVRIEAPIPGRSAVGIEVPNDKISLVTLKEVLEDKFPSKYKLEVGIGRDISGDPISIQLNEMPHLLVAGSTGSGKSVCINGIITSILLNTKPHEVKLMLIDPKMVELNVYNGIPHLLIPVVTNPHKASQALEKIVSEMERRYDLFQHSSTRNIEGYNQYIRKQNEELDEKQPELPYIVVIVDELADLMMVAGKEVENAIQRITQMARAAGIHLIVATQRPSVDVITGIIKNNIPSRIAFAVSSQTDSRTIIGAGGAEKLLGKGDMLYVGNGESTTTRIQGAFLSDQEVQDVVNYVVEQQKANYVKEMEPDAPVDKSEMKSEDALYDEAYLFVIEKQKASTSLLQRQFRIGYNRASRLMDDLERNQVIGPQKGSKPRQILVDLENDEV</sequence>
<keyword id="KW-0067">ATP-binding</keyword>
<keyword id="KW-0131">Cell cycle</keyword>
<keyword id="KW-0132">Cell division</keyword>
<keyword id="KW-1003">Cell membrane</keyword>
<keyword id="KW-0159">Chromosome partition</keyword>
<keyword id="KW-0238">DNA-binding</keyword>
<keyword id="KW-0472">Membrane</keyword>
<keyword id="KW-0547">Nucleotide-binding</keyword>
<keyword id="KW-0812">Transmembrane</keyword>
<keyword id="KW-1133">Transmembrane helix</keyword>
<organism>
    <name type="scientific">Staphylococcus epidermidis (strain ATCC 12228 / FDA PCI 1200)</name>
    <dbReference type="NCBI Taxonomy" id="176280"/>
    <lineage>
        <taxon>Bacteria</taxon>
        <taxon>Bacillati</taxon>
        <taxon>Bacillota</taxon>
        <taxon>Bacilli</taxon>
        <taxon>Bacillales</taxon>
        <taxon>Staphylococcaceae</taxon>
        <taxon>Staphylococcus</taxon>
    </lineage>
</organism>